<proteinExistence type="evidence at protein level"/>
<sequence>MANRTVKDAHSIHGTNPQYLVEKIIRTRIYESKYWKEECFGLTAELVVDKAMELKFVGGVYGGNIKPTPFLCLTLKMLQIQPEKDIIVEFIKNEDFKYVRMLGALYMRLTGTAIDCYKYLEPLYNDYRKIKSQNRNGEFVLMHVDEFIYELLHSERVCDIILPRLQKRYVLEEAEQLEPRVSALEEDMDDVESSEEEEEEDEKLERVPSPDHRRRSYRDLDKPRRSPALRYRRSRSRSPRRRSRSPKRRSPSPRRERHRSKSPRRHRSRSRDRRHRSRSKSPGHHRSHRHRSHSKSPERSKKSHKKSRRGNE</sequence>
<comment type="function">
    <text evidence="1">Involved in pre-mRNA splicing as a component of the spliceosome.</text>
</comment>
<comment type="subunit">
    <text evidence="1">Component of the spliceosome B complex. Interacts (via N-terminal interaction domain) with ZMAT2 and MFAP1.</text>
</comment>
<comment type="subcellular location">
    <subcellularLocation>
        <location evidence="1">Nucleus</location>
    </subcellularLocation>
</comment>
<comment type="alternative products">
    <event type="alternative splicing"/>
    <isoform>
        <id>Q4FK66-1</id>
        <name>1</name>
        <sequence type="displayed"/>
    </isoform>
    <isoform>
        <id>Q4FK66-2</id>
        <name>2</name>
        <sequence type="described" ref="VSP_025425 VSP_025426 VSP_025427"/>
    </isoform>
</comment>
<comment type="similarity">
    <text evidence="5">Belongs to the PRP38 family.</text>
</comment>
<dbReference type="EMBL" id="AK075925">
    <property type="protein sequence ID" value="BAC36057.1"/>
    <property type="molecule type" value="mRNA"/>
</dbReference>
<dbReference type="EMBL" id="AK169741">
    <property type="protein sequence ID" value="BAE41341.1"/>
    <property type="molecule type" value="mRNA"/>
</dbReference>
<dbReference type="EMBL" id="CT010186">
    <property type="protein sequence ID" value="CAJ18394.1"/>
    <property type="molecule type" value="mRNA"/>
</dbReference>
<dbReference type="EMBL" id="AL626783">
    <property type="status" value="NOT_ANNOTATED_CDS"/>
    <property type="molecule type" value="Genomic_DNA"/>
</dbReference>
<dbReference type="EMBL" id="BC059875">
    <property type="protein sequence ID" value="AAH59875.1"/>
    <property type="molecule type" value="mRNA"/>
</dbReference>
<dbReference type="CCDS" id="CCDS18452.1">
    <molecule id="Q4FK66-1"/>
</dbReference>
<dbReference type="RefSeq" id="NP_766285.2">
    <molecule id="Q4FK66-1"/>
    <property type="nucleotide sequence ID" value="NM_172697.3"/>
</dbReference>
<dbReference type="SMR" id="Q4FK66"/>
<dbReference type="FunCoup" id="Q4FK66">
    <property type="interactions" value="3955"/>
</dbReference>
<dbReference type="IntAct" id="Q4FK66">
    <property type="interactions" value="1"/>
</dbReference>
<dbReference type="STRING" id="10090.ENSMUSP00000078207"/>
<dbReference type="iPTMnet" id="Q4FK66"/>
<dbReference type="PhosphoSitePlus" id="Q4FK66"/>
<dbReference type="jPOST" id="Q4FK66"/>
<dbReference type="PaxDb" id="10090-ENSMUSP00000078207"/>
<dbReference type="PeptideAtlas" id="Q4FK66"/>
<dbReference type="ProteomicsDB" id="291545">
    <molecule id="Q4FK66-1"/>
</dbReference>
<dbReference type="ProteomicsDB" id="291546">
    <molecule id="Q4FK66-2"/>
</dbReference>
<dbReference type="Pumba" id="Q4FK66"/>
<dbReference type="Antibodypedia" id="53332">
    <property type="antibodies" value="114 antibodies from 24 providers"/>
</dbReference>
<dbReference type="DNASU" id="230596"/>
<dbReference type="Ensembl" id="ENSMUST00000079213.6">
    <molecule id="Q4FK66-1"/>
    <property type="protein sequence ID" value="ENSMUSP00000078207.6"/>
    <property type="gene ID" value="ENSMUSG00000063800.6"/>
</dbReference>
<dbReference type="GeneID" id="230596"/>
<dbReference type="KEGG" id="mmu:230596"/>
<dbReference type="UCSC" id="uc008ubf.2">
    <molecule id="Q4FK66-1"/>
    <property type="organism name" value="mouse"/>
</dbReference>
<dbReference type="AGR" id="MGI:1916962"/>
<dbReference type="CTD" id="84950"/>
<dbReference type="MGI" id="MGI:1916962">
    <property type="gene designation" value="Prpf38a"/>
</dbReference>
<dbReference type="VEuPathDB" id="HostDB:ENSMUSG00000063800"/>
<dbReference type="eggNOG" id="KOG2889">
    <property type="taxonomic scope" value="Eukaryota"/>
</dbReference>
<dbReference type="GeneTree" id="ENSGT00730000111085"/>
<dbReference type="HOGENOM" id="CLU_039466_1_0_1"/>
<dbReference type="InParanoid" id="Q4FK66"/>
<dbReference type="OMA" id="HTYWKEQ"/>
<dbReference type="OrthoDB" id="190958at2759"/>
<dbReference type="PhylomeDB" id="Q4FK66"/>
<dbReference type="TreeFam" id="TF105910"/>
<dbReference type="Reactome" id="R-MMU-72163">
    <property type="pathway name" value="mRNA Splicing - Major Pathway"/>
</dbReference>
<dbReference type="BioGRID-ORCS" id="230596">
    <property type="hits" value="25 hits in 78 CRISPR screens"/>
</dbReference>
<dbReference type="ChiTaRS" id="Prpf38a">
    <property type="organism name" value="mouse"/>
</dbReference>
<dbReference type="PRO" id="PR:Q4FK66"/>
<dbReference type="Proteomes" id="UP000000589">
    <property type="component" value="Chromosome 4"/>
</dbReference>
<dbReference type="RNAct" id="Q4FK66">
    <property type="molecule type" value="protein"/>
</dbReference>
<dbReference type="Bgee" id="ENSMUSG00000063800">
    <property type="expression patterns" value="Expressed in ear vesicle and 278 other cell types or tissues"/>
</dbReference>
<dbReference type="ExpressionAtlas" id="Q4FK66">
    <property type="expression patterns" value="baseline and differential"/>
</dbReference>
<dbReference type="GO" id="GO:0005654">
    <property type="term" value="C:nucleoplasm"/>
    <property type="evidence" value="ECO:0007669"/>
    <property type="project" value="Ensembl"/>
</dbReference>
<dbReference type="GO" id="GO:0005634">
    <property type="term" value="C:nucleus"/>
    <property type="evidence" value="ECO:0000250"/>
    <property type="project" value="UniProtKB"/>
</dbReference>
<dbReference type="GO" id="GO:0071005">
    <property type="term" value="C:U2-type precatalytic spliceosome"/>
    <property type="evidence" value="ECO:0000250"/>
    <property type="project" value="UniProtKB"/>
</dbReference>
<dbReference type="GO" id="GO:0000398">
    <property type="term" value="P:mRNA splicing, via spliceosome"/>
    <property type="evidence" value="ECO:0000250"/>
    <property type="project" value="UniProtKB"/>
</dbReference>
<dbReference type="InterPro" id="IPR005037">
    <property type="entry name" value="PRP38"/>
</dbReference>
<dbReference type="InterPro" id="IPR024767">
    <property type="entry name" value="PRP38_C"/>
</dbReference>
<dbReference type="PANTHER" id="PTHR23142">
    <property type="entry name" value="PRE-MRNA-SPLICING FACTOR 38A-RELATED"/>
    <property type="match status" value="1"/>
</dbReference>
<dbReference type="Pfam" id="PF03371">
    <property type="entry name" value="PRP38"/>
    <property type="match status" value="1"/>
</dbReference>
<dbReference type="Pfam" id="PF12871">
    <property type="entry name" value="PRP38_assoc"/>
    <property type="match status" value="1"/>
</dbReference>
<gene>
    <name type="primary">Prpf38a</name>
</gene>
<organism>
    <name type="scientific">Mus musculus</name>
    <name type="common">Mouse</name>
    <dbReference type="NCBI Taxonomy" id="10090"/>
    <lineage>
        <taxon>Eukaryota</taxon>
        <taxon>Metazoa</taxon>
        <taxon>Chordata</taxon>
        <taxon>Craniata</taxon>
        <taxon>Vertebrata</taxon>
        <taxon>Euteleostomi</taxon>
        <taxon>Mammalia</taxon>
        <taxon>Eutheria</taxon>
        <taxon>Euarchontoglires</taxon>
        <taxon>Glires</taxon>
        <taxon>Rodentia</taxon>
        <taxon>Myomorpha</taxon>
        <taxon>Muroidea</taxon>
        <taxon>Muridae</taxon>
        <taxon>Murinae</taxon>
        <taxon>Mus</taxon>
        <taxon>Mus</taxon>
    </lineage>
</organism>
<name>PR38A_MOUSE</name>
<protein>
    <recommendedName>
        <fullName>Pre-mRNA-splicing factor 38A</fullName>
    </recommendedName>
</protein>
<accession>Q4FK66</accession>
<accession>Q6PB58</accession>
<accession>Q8BVY2</accession>
<evidence type="ECO:0000250" key="1">
    <source>
        <dbReference type="UniProtKB" id="Q8NAV1"/>
    </source>
</evidence>
<evidence type="ECO:0000255" key="2"/>
<evidence type="ECO:0000256" key="3">
    <source>
        <dbReference type="SAM" id="MobiDB-lite"/>
    </source>
</evidence>
<evidence type="ECO:0000303" key="4">
    <source>
    </source>
</evidence>
<evidence type="ECO:0000305" key="5"/>
<evidence type="ECO:0007744" key="6">
    <source>
    </source>
</evidence>
<evidence type="ECO:0007744" key="7">
    <source>
    </source>
</evidence>
<reference key="1">
    <citation type="journal article" date="2005" name="Science">
        <title>The transcriptional landscape of the mammalian genome.</title>
        <authorList>
            <person name="Carninci P."/>
            <person name="Kasukawa T."/>
            <person name="Katayama S."/>
            <person name="Gough J."/>
            <person name="Frith M.C."/>
            <person name="Maeda N."/>
            <person name="Oyama R."/>
            <person name="Ravasi T."/>
            <person name="Lenhard B."/>
            <person name="Wells C."/>
            <person name="Kodzius R."/>
            <person name="Shimokawa K."/>
            <person name="Bajic V.B."/>
            <person name="Brenner S.E."/>
            <person name="Batalov S."/>
            <person name="Forrest A.R."/>
            <person name="Zavolan M."/>
            <person name="Davis M.J."/>
            <person name="Wilming L.G."/>
            <person name="Aidinis V."/>
            <person name="Allen J.E."/>
            <person name="Ambesi-Impiombato A."/>
            <person name="Apweiler R."/>
            <person name="Aturaliya R.N."/>
            <person name="Bailey T.L."/>
            <person name="Bansal M."/>
            <person name="Baxter L."/>
            <person name="Beisel K.W."/>
            <person name="Bersano T."/>
            <person name="Bono H."/>
            <person name="Chalk A.M."/>
            <person name="Chiu K.P."/>
            <person name="Choudhary V."/>
            <person name="Christoffels A."/>
            <person name="Clutterbuck D.R."/>
            <person name="Crowe M.L."/>
            <person name="Dalla E."/>
            <person name="Dalrymple B.P."/>
            <person name="de Bono B."/>
            <person name="Della Gatta G."/>
            <person name="di Bernardo D."/>
            <person name="Down T."/>
            <person name="Engstrom P."/>
            <person name="Fagiolini M."/>
            <person name="Faulkner G."/>
            <person name="Fletcher C.F."/>
            <person name="Fukushima T."/>
            <person name="Furuno M."/>
            <person name="Futaki S."/>
            <person name="Gariboldi M."/>
            <person name="Georgii-Hemming P."/>
            <person name="Gingeras T.R."/>
            <person name="Gojobori T."/>
            <person name="Green R.E."/>
            <person name="Gustincich S."/>
            <person name="Harbers M."/>
            <person name="Hayashi Y."/>
            <person name="Hensch T.K."/>
            <person name="Hirokawa N."/>
            <person name="Hill D."/>
            <person name="Huminiecki L."/>
            <person name="Iacono M."/>
            <person name="Ikeo K."/>
            <person name="Iwama A."/>
            <person name="Ishikawa T."/>
            <person name="Jakt M."/>
            <person name="Kanapin A."/>
            <person name="Katoh M."/>
            <person name="Kawasawa Y."/>
            <person name="Kelso J."/>
            <person name="Kitamura H."/>
            <person name="Kitano H."/>
            <person name="Kollias G."/>
            <person name="Krishnan S.P."/>
            <person name="Kruger A."/>
            <person name="Kummerfeld S.K."/>
            <person name="Kurochkin I.V."/>
            <person name="Lareau L.F."/>
            <person name="Lazarevic D."/>
            <person name="Lipovich L."/>
            <person name="Liu J."/>
            <person name="Liuni S."/>
            <person name="McWilliam S."/>
            <person name="Madan Babu M."/>
            <person name="Madera M."/>
            <person name="Marchionni L."/>
            <person name="Matsuda H."/>
            <person name="Matsuzawa S."/>
            <person name="Miki H."/>
            <person name="Mignone F."/>
            <person name="Miyake S."/>
            <person name="Morris K."/>
            <person name="Mottagui-Tabar S."/>
            <person name="Mulder N."/>
            <person name="Nakano N."/>
            <person name="Nakauchi H."/>
            <person name="Ng P."/>
            <person name="Nilsson R."/>
            <person name="Nishiguchi S."/>
            <person name="Nishikawa S."/>
            <person name="Nori F."/>
            <person name="Ohara O."/>
            <person name="Okazaki Y."/>
            <person name="Orlando V."/>
            <person name="Pang K.C."/>
            <person name="Pavan W.J."/>
            <person name="Pavesi G."/>
            <person name="Pesole G."/>
            <person name="Petrovsky N."/>
            <person name="Piazza S."/>
            <person name="Reed J."/>
            <person name="Reid J.F."/>
            <person name="Ring B.Z."/>
            <person name="Ringwald M."/>
            <person name="Rost B."/>
            <person name="Ruan Y."/>
            <person name="Salzberg S.L."/>
            <person name="Sandelin A."/>
            <person name="Schneider C."/>
            <person name="Schoenbach C."/>
            <person name="Sekiguchi K."/>
            <person name="Semple C.A."/>
            <person name="Seno S."/>
            <person name="Sessa L."/>
            <person name="Sheng Y."/>
            <person name="Shibata Y."/>
            <person name="Shimada H."/>
            <person name="Shimada K."/>
            <person name="Silva D."/>
            <person name="Sinclair B."/>
            <person name="Sperling S."/>
            <person name="Stupka E."/>
            <person name="Sugiura K."/>
            <person name="Sultana R."/>
            <person name="Takenaka Y."/>
            <person name="Taki K."/>
            <person name="Tammoja K."/>
            <person name="Tan S.L."/>
            <person name="Tang S."/>
            <person name="Taylor M.S."/>
            <person name="Tegner J."/>
            <person name="Teichmann S.A."/>
            <person name="Ueda H.R."/>
            <person name="van Nimwegen E."/>
            <person name="Verardo R."/>
            <person name="Wei C.L."/>
            <person name="Yagi K."/>
            <person name="Yamanishi H."/>
            <person name="Zabarovsky E."/>
            <person name="Zhu S."/>
            <person name="Zimmer A."/>
            <person name="Hide W."/>
            <person name="Bult C."/>
            <person name="Grimmond S.M."/>
            <person name="Teasdale R.D."/>
            <person name="Liu E.T."/>
            <person name="Brusic V."/>
            <person name="Quackenbush J."/>
            <person name="Wahlestedt C."/>
            <person name="Mattick J.S."/>
            <person name="Hume D.A."/>
            <person name="Kai C."/>
            <person name="Sasaki D."/>
            <person name="Tomaru Y."/>
            <person name="Fukuda S."/>
            <person name="Kanamori-Katayama M."/>
            <person name="Suzuki M."/>
            <person name="Aoki J."/>
            <person name="Arakawa T."/>
            <person name="Iida J."/>
            <person name="Imamura K."/>
            <person name="Itoh M."/>
            <person name="Kato T."/>
            <person name="Kawaji H."/>
            <person name="Kawagashira N."/>
            <person name="Kawashima T."/>
            <person name="Kojima M."/>
            <person name="Kondo S."/>
            <person name="Konno H."/>
            <person name="Nakano K."/>
            <person name="Ninomiya N."/>
            <person name="Nishio T."/>
            <person name="Okada M."/>
            <person name="Plessy C."/>
            <person name="Shibata K."/>
            <person name="Shiraki T."/>
            <person name="Suzuki S."/>
            <person name="Tagami M."/>
            <person name="Waki K."/>
            <person name="Watahiki A."/>
            <person name="Okamura-Oho Y."/>
            <person name="Suzuki H."/>
            <person name="Kawai J."/>
            <person name="Hayashizaki Y."/>
        </authorList>
    </citation>
    <scope>NUCLEOTIDE SEQUENCE [LARGE SCALE MRNA]</scope>
    <source>
        <strain>C57BL/6J</strain>
        <strain>NOD</strain>
        <tissue>Thymus</tissue>
    </source>
</reference>
<reference key="2">
    <citation type="submission" date="2005-07" db="EMBL/GenBank/DDBJ databases">
        <title>Cloning of mouse full open reading frames in Gateway(R) system entry vector (pDONR201).</title>
        <authorList>
            <person name="Ebert L."/>
            <person name="Muenstermann E."/>
            <person name="Schatten R."/>
            <person name="Henze S."/>
            <person name="Bohn E."/>
            <person name="Mollenhauer J."/>
            <person name="Wiemann S."/>
            <person name="Schick M."/>
            <person name="Korn B."/>
        </authorList>
    </citation>
    <scope>NUCLEOTIDE SEQUENCE [LARGE SCALE MRNA] (ISOFORM 1)</scope>
</reference>
<reference key="3">
    <citation type="journal article" date="2009" name="PLoS Biol.">
        <title>Lineage-specific biology revealed by a finished genome assembly of the mouse.</title>
        <authorList>
            <person name="Church D.M."/>
            <person name="Goodstadt L."/>
            <person name="Hillier L.W."/>
            <person name="Zody M.C."/>
            <person name="Goldstein S."/>
            <person name="She X."/>
            <person name="Bult C.J."/>
            <person name="Agarwala R."/>
            <person name="Cherry J.L."/>
            <person name="DiCuccio M."/>
            <person name="Hlavina W."/>
            <person name="Kapustin Y."/>
            <person name="Meric P."/>
            <person name="Maglott D."/>
            <person name="Birtle Z."/>
            <person name="Marques A.C."/>
            <person name="Graves T."/>
            <person name="Zhou S."/>
            <person name="Teague B."/>
            <person name="Potamousis K."/>
            <person name="Churas C."/>
            <person name="Place M."/>
            <person name="Herschleb J."/>
            <person name="Runnheim R."/>
            <person name="Forrest D."/>
            <person name="Amos-Landgraf J."/>
            <person name="Schwartz D.C."/>
            <person name="Cheng Z."/>
            <person name="Lindblad-Toh K."/>
            <person name="Eichler E.E."/>
            <person name="Ponting C.P."/>
        </authorList>
    </citation>
    <scope>NUCLEOTIDE SEQUENCE [LARGE SCALE GENOMIC DNA]</scope>
    <source>
        <strain>C57BL/6J</strain>
    </source>
</reference>
<reference key="4">
    <citation type="journal article" date="2004" name="Genome Res.">
        <title>The status, quality, and expansion of the NIH full-length cDNA project: the Mammalian Gene Collection (MGC).</title>
        <authorList>
            <consortium name="The MGC Project Team"/>
        </authorList>
    </citation>
    <scope>NUCLEOTIDE SEQUENCE [LARGE SCALE MRNA] (ISOFORM 2)</scope>
    <source>
        <strain>C57BL/6J</strain>
        <tissue>Brain</tissue>
    </source>
</reference>
<reference key="5">
    <citation type="journal article" date="2007" name="Proc. Natl. Acad. Sci. U.S.A.">
        <title>Large-scale phosphorylation analysis of mouse liver.</title>
        <authorList>
            <person name="Villen J."/>
            <person name="Beausoleil S.A."/>
            <person name="Gerber S.A."/>
            <person name="Gygi S.P."/>
        </authorList>
    </citation>
    <scope>PHOSPHORYLATION [LARGE SCALE ANALYSIS] AT SER-193 AND SER-194</scope>
    <scope>IDENTIFICATION BY MASS SPECTROMETRY [LARGE SCALE ANALYSIS]</scope>
    <source>
        <tissue>Liver</tissue>
    </source>
</reference>
<reference key="6">
    <citation type="journal article" date="2010" name="Cell">
        <title>A tissue-specific atlas of mouse protein phosphorylation and expression.</title>
        <authorList>
            <person name="Huttlin E.L."/>
            <person name="Jedrychowski M.P."/>
            <person name="Elias J.E."/>
            <person name="Goswami T."/>
            <person name="Rad R."/>
            <person name="Beausoleil S.A."/>
            <person name="Villen J."/>
            <person name="Haas W."/>
            <person name="Sowa M.E."/>
            <person name="Gygi S.P."/>
        </authorList>
    </citation>
    <scope>PHOSPHORYLATION [LARGE SCALE ANALYSIS] AT SER-193; SER-194 AND SER-209</scope>
    <scope>IDENTIFICATION BY MASS SPECTROMETRY [LARGE SCALE ANALYSIS]</scope>
    <source>
        <tissue>Brain</tissue>
        <tissue>Brown adipose tissue</tissue>
        <tissue>Heart</tissue>
        <tissue>Kidney</tissue>
        <tissue>Liver</tissue>
        <tissue>Lung</tissue>
        <tissue>Pancreas</tissue>
        <tissue>Spleen</tissue>
        <tissue>Testis</tissue>
    </source>
</reference>
<feature type="chain" id="PRO_0000287274" description="Pre-mRNA-splicing factor 38A">
    <location>
        <begin position="1"/>
        <end position="312"/>
    </location>
</feature>
<feature type="region of interest" description="N-terminal protein interaction domain" evidence="1">
    <location>
        <begin position="1"/>
        <end position="179"/>
    </location>
</feature>
<feature type="region of interest" description="Disordered" evidence="3">
    <location>
        <begin position="181"/>
        <end position="312"/>
    </location>
</feature>
<feature type="coiled-coil region" evidence="2">
    <location>
        <begin position="170"/>
        <end position="204"/>
    </location>
</feature>
<feature type="compositionally biased region" description="Acidic residues" evidence="3">
    <location>
        <begin position="184"/>
        <end position="202"/>
    </location>
</feature>
<feature type="compositionally biased region" description="Basic and acidic residues" evidence="3">
    <location>
        <begin position="203"/>
        <end position="224"/>
    </location>
</feature>
<feature type="compositionally biased region" description="Basic residues" evidence="3">
    <location>
        <begin position="225"/>
        <end position="294"/>
    </location>
</feature>
<feature type="compositionally biased region" description="Basic residues" evidence="3">
    <location>
        <begin position="301"/>
        <end position="312"/>
    </location>
</feature>
<feature type="modified residue" description="Phosphoserine" evidence="1">
    <location>
        <position position="11"/>
    </location>
</feature>
<feature type="modified residue" description="Phosphoserine" evidence="6 7">
    <location>
        <position position="193"/>
    </location>
</feature>
<feature type="modified residue" description="Phosphoserine" evidence="6 7">
    <location>
        <position position="194"/>
    </location>
</feature>
<feature type="modified residue" description="Phosphoserine" evidence="7">
    <location>
        <position position="209"/>
    </location>
</feature>
<feature type="modified residue" description="Phosphoserine" evidence="1">
    <location>
        <position position="226"/>
    </location>
</feature>
<feature type="splice variant" id="VSP_025425" description="In isoform 2." evidence="4">
    <location>
        <begin position="1"/>
        <end position="141"/>
    </location>
</feature>
<feature type="splice variant" id="VSP_025426" description="In isoform 2." evidence="4">
    <original>LERV</original>
    <variation>VRHV</variation>
    <location>
        <begin position="204"/>
        <end position="207"/>
    </location>
</feature>
<feature type="splice variant" id="VSP_025427" description="In isoform 2." evidence="4">
    <location>
        <begin position="208"/>
        <end position="312"/>
    </location>
</feature>
<feature type="sequence conflict" description="In Ref. 1; BAC36057." evidence="5" ref="1">
    <original>Y</original>
    <variation>F</variation>
    <location>
        <position position="61"/>
    </location>
</feature>
<keyword id="KW-0025">Alternative splicing</keyword>
<keyword id="KW-0175">Coiled coil</keyword>
<keyword id="KW-0507">mRNA processing</keyword>
<keyword id="KW-0508">mRNA splicing</keyword>
<keyword id="KW-0539">Nucleus</keyword>
<keyword id="KW-0597">Phosphoprotein</keyword>
<keyword id="KW-1185">Reference proteome</keyword>
<keyword id="KW-0747">Spliceosome</keyword>